<organism>
    <name type="scientific">Staphylococcus aureus (strain MW2)</name>
    <dbReference type="NCBI Taxonomy" id="196620"/>
    <lineage>
        <taxon>Bacteria</taxon>
        <taxon>Bacillati</taxon>
        <taxon>Bacillota</taxon>
        <taxon>Bacilli</taxon>
        <taxon>Bacillales</taxon>
        <taxon>Staphylococcaceae</taxon>
        <taxon>Staphylococcus</taxon>
    </lineage>
</organism>
<feature type="chain" id="PRO_0000170999" description="Molybdopterin molybdenumtransferase">
    <location>
        <begin position="1"/>
        <end position="419"/>
    </location>
</feature>
<comment type="function">
    <text evidence="1">Catalyzes the insertion of molybdate into adenylated molybdopterin with the concomitant release of AMP.</text>
</comment>
<comment type="catalytic activity">
    <reaction>
        <text>adenylyl-molybdopterin + molybdate = Mo-molybdopterin + AMP + H(+)</text>
        <dbReference type="Rhea" id="RHEA:35047"/>
        <dbReference type="ChEBI" id="CHEBI:15378"/>
        <dbReference type="ChEBI" id="CHEBI:36264"/>
        <dbReference type="ChEBI" id="CHEBI:62727"/>
        <dbReference type="ChEBI" id="CHEBI:71302"/>
        <dbReference type="ChEBI" id="CHEBI:456215"/>
        <dbReference type="EC" id="2.10.1.1"/>
    </reaction>
</comment>
<comment type="cofactor">
    <cofactor evidence="1">
        <name>Mg(2+)</name>
        <dbReference type="ChEBI" id="CHEBI:18420"/>
    </cofactor>
    <text evidence="1">Binds 1 Mg(2+) ion per subunit.</text>
</comment>
<comment type="pathway">
    <text>Cofactor biosynthesis; molybdopterin biosynthesis.</text>
</comment>
<comment type="similarity">
    <text evidence="2">Belongs to the MoeA family.</text>
</comment>
<evidence type="ECO:0000250" key="1"/>
<evidence type="ECO:0000305" key="2"/>
<protein>
    <recommendedName>
        <fullName>Molybdopterin molybdenumtransferase</fullName>
        <shortName>MPT Mo-transferase</shortName>
        <ecNumber>2.10.1.1</ecNumber>
    </recommendedName>
</protein>
<sequence>MVVEKRNPIPVKEAIQRIVNQQSSMPAITVALEKSLNHILAEDIVATYDIPRFDKSPYDGFAIRSVDSQGASGQNRIEFKVIDHIGAGSVSDKLVGDHEAVRIMTGAQIPNGADAVVMFEQTIELEDTFTIRKPFSKNENISLKGEETTTGDVVLKKGQVINPGAIAVLATYGYAEVKVIKQPSVAVIATGSELLDVNDVLEDGKIRNSNGPMIRALAEKLGLEVGIYKTQKDDLDSGIQVVKEAMEKHDIVITTGGVSVGDFDYLPEIYKAVKAEVLFNKVAMRPGSVTTVAFVDGKYLFGLSGNPSACFTGFELFVKPAVKHMCGALEVFPQIIKATLMEDFTKANPFTRFIRAKATLTSAGATVVPSGFNKSGAVVAIAHANCMVMLPGGSRGFKAGHTVDIILTESDAAEEELLL</sequence>
<keyword id="KW-0460">Magnesium</keyword>
<keyword id="KW-0479">Metal-binding</keyword>
<keyword id="KW-0500">Molybdenum</keyword>
<keyword id="KW-0501">Molybdenum cofactor biosynthesis</keyword>
<keyword id="KW-0808">Transferase</keyword>
<name>MOEA_STAAW</name>
<proteinExistence type="inferred from homology"/>
<gene>
    <name type="primary">moeA</name>
    <name type="ordered locus">MW2191</name>
</gene>
<dbReference type="EC" id="2.10.1.1"/>
<dbReference type="EMBL" id="BA000033">
    <property type="protein sequence ID" value="BAB96056.1"/>
    <property type="molecule type" value="Genomic_DNA"/>
</dbReference>
<dbReference type="SMR" id="Q8NVA1"/>
<dbReference type="KEGG" id="sam:MW2191"/>
<dbReference type="HOGENOM" id="CLU_010186_7_1_9"/>
<dbReference type="UniPathway" id="UPA00344"/>
<dbReference type="GO" id="GO:0005829">
    <property type="term" value="C:cytosol"/>
    <property type="evidence" value="ECO:0007669"/>
    <property type="project" value="TreeGrafter"/>
</dbReference>
<dbReference type="GO" id="GO:0046872">
    <property type="term" value="F:metal ion binding"/>
    <property type="evidence" value="ECO:0007669"/>
    <property type="project" value="UniProtKB-KW"/>
</dbReference>
<dbReference type="GO" id="GO:0061599">
    <property type="term" value="F:molybdopterin molybdotransferase activity"/>
    <property type="evidence" value="ECO:0007669"/>
    <property type="project" value="UniProtKB-EC"/>
</dbReference>
<dbReference type="GO" id="GO:0006777">
    <property type="term" value="P:Mo-molybdopterin cofactor biosynthetic process"/>
    <property type="evidence" value="ECO:0007669"/>
    <property type="project" value="UniProtKB-KW"/>
</dbReference>
<dbReference type="CDD" id="cd00887">
    <property type="entry name" value="MoeA"/>
    <property type="match status" value="1"/>
</dbReference>
<dbReference type="FunFam" id="2.170.190.11:FF:000001">
    <property type="entry name" value="Molybdopterin molybdenumtransferase"/>
    <property type="match status" value="1"/>
</dbReference>
<dbReference type="FunFam" id="2.40.340.10:FF:000002">
    <property type="entry name" value="Molybdopterin molybdenumtransferase"/>
    <property type="match status" value="1"/>
</dbReference>
<dbReference type="FunFam" id="3.40.980.10:FF:000004">
    <property type="entry name" value="Molybdopterin molybdenumtransferase"/>
    <property type="match status" value="1"/>
</dbReference>
<dbReference type="Gene3D" id="3.40.980.10">
    <property type="entry name" value="MoaB/Mog-like domain"/>
    <property type="match status" value="1"/>
</dbReference>
<dbReference type="Gene3D" id="2.40.340.10">
    <property type="entry name" value="MoeA, C-terminal, domain IV"/>
    <property type="match status" value="1"/>
</dbReference>
<dbReference type="Gene3D" id="3.90.105.10">
    <property type="entry name" value="Molybdopterin biosynthesis moea protein, domain 2"/>
    <property type="match status" value="1"/>
</dbReference>
<dbReference type="Gene3D" id="2.170.190.11">
    <property type="entry name" value="Molybdopterin biosynthesis moea protein, domain 3"/>
    <property type="match status" value="1"/>
</dbReference>
<dbReference type="InterPro" id="IPR036425">
    <property type="entry name" value="MoaB/Mog-like_dom_sf"/>
</dbReference>
<dbReference type="InterPro" id="IPR001453">
    <property type="entry name" value="MoaB/Mog_dom"/>
</dbReference>
<dbReference type="InterPro" id="IPR038987">
    <property type="entry name" value="MoeA-like"/>
</dbReference>
<dbReference type="InterPro" id="IPR005111">
    <property type="entry name" value="MoeA_C_domain_IV"/>
</dbReference>
<dbReference type="InterPro" id="IPR036688">
    <property type="entry name" value="MoeA_C_domain_IV_sf"/>
</dbReference>
<dbReference type="InterPro" id="IPR005110">
    <property type="entry name" value="MoeA_linker/N"/>
</dbReference>
<dbReference type="InterPro" id="IPR036135">
    <property type="entry name" value="MoeA_linker/N_sf"/>
</dbReference>
<dbReference type="NCBIfam" id="NF045515">
    <property type="entry name" value="Glp_gephyrin"/>
    <property type="match status" value="1"/>
</dbReference>
<dbReference type="NCBIfam" id="TIGR00177">
    <property type="entry name" value="molyb_syn"/>
    <property type="match status" value="1"/>
</dbReference>
<dbReference type="PANTHER" id="PTHR10192:SF5">
    <property type="entry name" value="GEPHYRIN"/>
    <property type="match status" value="1"/>
</dbReference>
<dbReference type="PANTHER" id="PTHR10192">
    <property type="entry name" value="MOLYBDOPTERIN BIOSYNTHESIS PROTEIN"/>
    <property type="match status" value="1"/>
</dbReference>
<dbReference type="Pfam" id="PF00994">
    <property type="entry name" value="MoCF_biosynth"/>
    <property type="match status" value="1"/>
</dbReference>
<dbReference type="Pfam" id="PF03454">
    <property type="entry name" value="MoeA_C"/>
    <property type="match status" value="1"/>
</dbReference>
<dbReference type="Pfam" id="PF03453">
    <property type="entry name" value="MoeA_N"/>
    <property type="match status" value="1"/>
</dbReference>
<dbReference type="SMART" id="SM00852">
    <property type="entry name" value="MoCF_biosynth"/>
    <property type="match status" value="1"/>
</dbReference>
<dbReference type="SUPFAM" id="SSF63867">
    <property type="entry name" value="MoeA C-terminal domain-like"/>
    <property type="match status" value="1"/>
</dbReference>
<dbReference type="SUPFAM" id="SSF63882">
    <property type="entry name" value="MoeA N-terminal region -like"/>
    <property type="match status" value="1"/>
</dbReference>
<dbReference type="SUPFAM" id="SSF53218">
    <property type="entry name" value="Molybdenum cofactor biosynthesis proteins"/>
    <property type="match status" value="1"/>
</dbReference>
<reference key="1">
    <citation type="journal article" date="2002" name="Lancet">
        <title>Genome and virulence determinants of high virulence community-acquired MRSA.</title>
        <authorList>
            <person name="Baba T."/>
            <person name="Takeuchi F."/>
            <person name="Kuroda M."/>
            <person name="Yuzawa H."/>
            <person name="Aoki K."/>
            <person name="Oguchi A."/>
            <person name="Nagai Y."/>
            <person name="Iwama N."/>
            <person name="Asano K."/>
            <person name="Naimi T."/>
            <person name="Kuroda H."/>
            <person name="Cui L."/>
            <person name="Yamamoto K."/>
            <person name="Hiramatsu K."/>
        </authorList>
    </citation>
    <scope>NUCLEOTIDE SEQUENCE [LARGE SCALE GENOMIC DNA]</scope>
    <source>
        <strain>MW2</strain>
    </source>
</reference>
<accession>Q8NVA1</accession>